<accession>Q44336</accession>
<comment type="subunit">
    <text evidence="1">The basal body constitutes a major portion of the flagellar organelle and consists of four rings (L,P,S, and M) mounted on a central rod. The rod consists of about 26 subunits of FlgG in the distal portion, and FlgB, FlgC and FlgF are thought to build up the proximal portion of the rod with about 6 subunits each (By similarity).</text>
</comment>
<comment type="subcellular location">
    <subcellularLocation>
        <location evidence="1">Bacterial flagellum basal body</location>
    </subcellularLocation>
</comment>
<comment type="similarity">
    <text evidence="2">Belongs to the flagella basal body rod proteins family.</text>
</comment>
<protein>
    <recommendedName>
        <fullName>Flagellar basal-body rod protein FlgC</fullName>
    </recommendedName>
</protein>
<proteinExistence type="inferred from homology"/>
<reference key="1">
    <citation type="journal article" date="1997" name="Gene">
        <title>Isolation and characterisation of a linked cluster of genes from Agrobacterium tumefaciens encoding proteins involved in flagellar basal-body structure.</title>
        <authorList>
            <person name="Deakin W.J."/>
            <person name="Furniss C.S."/>
            <person name="Parker V.E."/>
            <person name="Shaw C.H."/>
        </authorList>
    </citation>
    <scope>NUCLEOTIDE SEQUENCE [GENOMIC DNA]</scope>
</reference>
<reference key="2">
    <citation type="journal article" date="2001" name="Science">
        <title>The genome of the natural genetic engineer Agrobacterium tumefaciens C58.</title>
        <authorList>
            <person name="Wood D.W."/>
            <person name="Setubal J.C."/>
            <person name="Kaul R."/>
            <person name="Monks D.E."/>
            <person name="Kitajima J.P."/>
            <person name="Okura V.K."/>
            <person name="Zhou Y."/>
            <person name="Chen L."/>
            <person name="Wood G.E."/>
            <person name="Almeida N.F. Jr."/>
            <person name="Woo L."/>
            <person name="Chen Y."/>
            <person name="Paulsen I.T."/>
            <person name="Eisen J.A."/>
            <person name="Karp P.D."/>
            <person name="Bovee D. Sr."/>
            <person name="Chapman P."/>
            <person name="Clendenning J."/>
            <person name="Deatherage G."/>
            <person name="Gillet W."/>
            <person name="Grant C."/>
            <person name="Kutyavin T."/>
            <person name="Levy R."/>
            <person name="Li M.-J."/>
            <person name="McClelland E."/>
            <person name="Palmieri A."/>
            <person name="Raymond C."/>
            <person name="Rouse G."/>
            <person name="Saenphimmachak C."/>
            <person name="Wu Z."/>
            <person name="Romero P."/>
            <person name="Gordon D."/>
            <person name="Zhang S."/>
            <person name="Yoo H."/>
            <person name="Tao Y."/>
            <person name="Biddle P."/>
            <person name="Jung M."/>
            <person name="Krespan W."/>
            <person name="Perry M."/>
            <person name="Gordon-Kamm B."/>
            <person name="Liao L."/>
            <person name="Kim S."/>
            <person name="Hendrick C."/>
            <person name="Zhao Z.-Y."/>
            <person name="Dolan M."/>
            <person name="Chumley F."/>
            <person name="Tingey S.V."/>
            <person name="Tomb J.-F."/>
            <person name="Gordon M.P."/>
            <person name="Olson M.V."/>
            <person name="Nester E.W."/>
        </authorList>
    </citation>
    <scope>NUCLEOTIDE SEQUENCE [LARGE SCALE GENOMIC DNA]</scope>
    <source>
        <strain>C58 / ATCC 33970</strain>
    </source>
</reference>
<reference key="3">
    <citation type="journal article" date="2001" name="Science">
        <title>Genome sequence of the plant pathogen and biotechnology agent Agrobacterium tumefaciens C58.</title>
        <authorList>
            <person name="Goodner B."/>
            <person name="Hinkle G."/>
            <person name="Gattung S."/>
            <person name="Miller N."/>
            <person name="Blanchard M."/>
            <person name="Qurollo B."/>
            <person name="Goldman B.S."/>
            <person name="Cao Y."/>
            <person name="Askenazi M."/>
            <person name="Halling C."/>
            <person name="Mullin L."/>
            <person name="Houmiel K."/>
            <person name="Gordon J."/>
            <person name="Vaudin M."/>
            <person name="Iartchouk O."/>
            <person name="Epp A."/>
            <person name="Liu F."/>
            <person name="Wollam C."/>
            <person name="Allinger M."/>
            <person name="Doughty D."/>
            <person name="Scott C."/>
            <person name="Lappas C."/>
            <person name="Markelz B."/>
            <person name="Flanagan C."/>
            <person name="Crowell C."/>
            <person name="Gurson J."/>
            <person name="Lomo C."/>
            <person name="Sear C."/>
            <person name="Strub G."/>
            <person name="Cielo C."/>
            <person name="Slater S."/>
        </authorList>
    </citation>
    <scope>NUCLEOTIDE SEQUENCE [LARGE SCALE GENOMIC DNA]</scope>
    <source>
        <strain>C58 / ATCC 33970</strain>
    </source>
</reference>
<name>FLGC_AGRFC</name>
<keyword id="KW-0975">Bacterial flagellum</keyword>
<keyword id="KW-1185">Reference proteome</keyword>
<dbReference type="EMBL" id="U39941">
    <property type="protein sequence ID" value="AAB68966.1"/>
    <property type="molecule type" value="Genomic_DNA"/>
</dbReference>
<dbReference type="EMBL" id="U95165">
    <property type="protein sequence ID" value="AAB71788.1"/>
    <property type="molecule type" value="Genomic_DNA"/>
</dbReference>
<dbReference type="EMBL" id="AE007869">
    <property type="protein sequence ID" value="AAK86366.1"/>
    <property type="molecule type" value="Genomic_DNA"/>
</dbReference>
<dbReference type="PIR" id="AE2644">
    <property type="entry name" value="AE2644"/>
</dbReference>
<dbReference type="PIR" id="E97426">
    <property type="entry name" value="E97426"/>
</dbReference>
<dbReference type="RefSeq" id="NP_353581.1">
    <property type="nucleotide sequence ID" value="NC_003062.2"/>
</dbReference>
<dbReference type="RefSeq" id="WP_006313019.1">
    <property type="nucleotide sequence ID" value="NC_003062.2"/>
</dbReference>
<dbReference type="SMR" id="Q44336"/>
<dbReference type="STRING" id="176299.Atu0554"/>
<dbReference type="EnsemblBacteria" id="AAK86366">
    <property type="protein sequence ID" value="AAK86366"/>
    <property type="gene ID" value="Atu0554"/>
</dbReference>
<dbReference type="GeneID" id="1132592"/>
<dbReference type="KEGG" id="atu:Atu0554"/>
<dbReference type="PATRIC" id="fig|176299.10.peg.550"/>
<dbReference type="eggNOG" id="COG1558">
    <property type="taxonomic scope" value="Bacteria"/>
</dbReference>
<dbReference type="HOGENOM" id="CLU_123272_2_0_5"/>
<dbReference type="OrthoDB" id="9813951at2"/>
<dbReference type="PhylomeDB" id="Q44336"/>
<dbReference type="BioCyc" id="AGRO:ATU0554-MONOMER"/>
<dbReference type="Proteomes" id="UP000000813">
    <property type="component" value="Chromosome circular"/>
</dbReference>
<dbReference type="GO" id="GO:0009425">
    <property type="term" value="C:bacterial-type flagellum basal body"/>
    <property type="evidence" value="ECO:0000303"/>
    <property type="project" value="PAMGO_GAT"/>
</dbReference>
<dbReference type="GO" id="GO:0030694">
    <property type="term" value="C:bacterial-type flagellum basal body, rod"/>
    <property type="evidence" value="ECO:0007669"/>
    <property type="project" value="InterPro"/>
</dbReference>
<dbReference type="GO" id="GO:0071978">
    <property type="term" value="P:bacterial-type flagellum-dependent swarming motility"/>
    <property type="evidence" value="ECO:0007669"/>
    <property type="project" value="TreeGrafter"/>
</dbReference>
<dbReference type="InterPro" id="IPR019776">
    <property type="entry name" value="Flagellar_basal_body_rod_CS"/>
</dbReference>
<dbReference type="InterPro" id="IPR010930">
    <property type="entry name" value="Flg_bb/hook_C_dom"/>
</dbReference>
<dbReference type="InterPro" id="IPR006299">
    <property type="entry name" value="FlgC"/>
</dbReference>
<dbReference type="NCBIfam" id="TIGR01395">
    <property type="entry name" value="FlgC"/>
    <property type="match status" value="1"/>
</dbReference>
<dbReference type="PANTHER" id="PTHR30435:SF2">
    <property type="entry name" value="FLAGELLAR BASAL-BODY ROD PROTEIN FLGC"/>
    <property type="match status" value="1"/>
</dbReference>
<dbReference type="PANTHER" id="PTHR30435">
    <property type="entry name" value="FLAGELLAR PROTEIN"/>
    <property type="match status" value="1"/>
</dbReference>
<dbReference type="Pfam" id="PF06429">
    <property type="entry name" value="Flg_bbr_C"/>
    <property type="match status" value="1"/>
</dbReference>
<dbReference type="PROSITE" id="PS00588">
    <property type="entry name" value="FLAGELLA_BB_ROD"/>
    <property type="match status" value="1"/>
</dbReference>
<evidence type="ECO:0000250" key="1"/>
<evidence type="ECO:0000305" key="2"/>
<gene>
    <name type="primary">flgC</name>
    <name type="ordered locus">Atu0554</name>
    <name type="ORF">AGR_C_975</name>
</gene>
<sequence>MDPLSAASKIAGSGLEVQSTRLRIVSENIANARSTGDTPGADPYRRKTVTFGSELDHVSGVERVKVKKLGVDRGDFVHEYDPGNPAADTNGMVKMPNVNVLIEMADMREANRSYDANLQVIRQTRDLVASTIDLLKASQ</sequence>
<feature type="chain" id="PRO_0000180795" description="Flagellar basal-body rod protein FlgC">
    <location>
        <begin position="1"/>
        <end position="139"/>
    </location>
</feature>
<feature type="sequence conflict" description="In Ref. 1; AAB68966/AAB71788." evidence="2" ref="1">
    <original>IA</original>
    <variation>MS</variation>
    <location>
        <begin position="10"/>
        <end position="11"/>
    </location>
</feature>
<feature type="sequence conflict" description="In Ref. 1; AAB68966/AAB71788." evidence="2" ref="1">
    <original>L</original>
    <variation>V</variation>
    <location>
        <position position="101"/>
    </location>
</feature>
<organism>
    <name type="scientific">Agrobacterium fabrum (strain C58 / ATCC 33970)</name>
    <name type="common">Agrobacterium tumefaciens (strain C58)</name>
    <dbReference type="NCBI Taxonomy" id="176299"/>
    <lineage>
        <taxon>Bacteria</taxon>
        <taxon>Pseudomonadati</taxon>
        <taxon>Pseudomonadota</taxon>
        <taxon>Alphaproteobacteria</taxon>
        <taxon>Hyphomicrobiales</taxon>
        <taxon>Rhizobiaceae</taxon>
        <taxon>Rhizobium/Agrobacterium group</taxon>
        <taxon>Agrobacterium</taxon>
        <taxon>Agrobacterium tumefaciens complex</taxon>
    </lineage>
</organism>